<name>STHA_CITK8</name>
<keyword id="KW-0963">Cytoplasm</keyword>
<keyword id="KW-0274">FAD</keyword>
<keyword id="KW-0285">Flavoprotein</keyword>
<keyword id="KW-0520">NAD</keyword>
<keyword id="KW-0521">NADP</keyword>
<keyword id="KW-0560">Oxidoreductase</keyword>
<keyword id="KW-1185">Reference proteome</keyword>
<feature type="chain" id="PRO_1000012555" description="Soluble pyridine nucleotide transhydrogenase">
    <location>
        <begin position="1"/>
        <end position="466"/>
    </location>
</feature>
<feature type="binding site" evidence="1">
    <location>
        <begin position="36"/>
        <end position="45"/>
    </location>
    <ligand>
        <name>FAD</name>
        <dbReference type="ChEBI" id="CHEBI:57692"/>
    </ligand>
</feature>
<proteinExistence type="inferred from homology"/>
<protein>
    <recommendedName>
        <fullName evidence="1">Soluble pyridine nucleotide transhydrogenase</fullName>
        <shortName evidence="1">STH</shortName>
        <ecNumber evidence="1">1.6.1.1</ecNumber>
    </recommendedName>
    <alternativeName>
        <fullName evidence="1">NAD(P)(+) transhydrogenase [B-specific]</fullName>
    </alternativeName>
</protein>
<sequence>MPHSWDYDAIVIGSGPGGEGAAMGLVKQGARVAVIERYHNVGGGCTHWGTIPSKALRHAVSRIIEFNQNPLYSDHSRLLRSSFADILNHADNVINQQTRMRQGFYERNHCEILQGNAHFVDENTLALECHDGTVETLTAEKFVIACGSRPYHPADVDFAHPRIYDSDSILSLHHEPRHVIIYGAGVIGCEYASIFRGMDVKVDLINTRDRLLAFLDQEMSDSLSYHFWNSGVVIRHNEEYEKIEGCDDGVIMHLKSGKKLKADCLLYANGRTGNTDSLALGNIGLETDSRGQLKVNSMYQTALPHIYAVGDVIGYPSLASAAYDQGRIAAQALVKGEATAHLIEDIPTGIYTIPEISSVGKTEQQLTAMKVPYEVGRAQFKHLARAQIVGMNVGTLKILFHRETKEILGIHCFGERAAEIIHIGQAIMEQKGGGNTIEYFVNTTFNYPTMAEAYRVAALNGLNRLF</sequence>
<accession>A8AKW0</accession>
<gene>
    <name evidence="1" type="primary">sthA</name>
    <name evidence="1" type="synonym">udhA</name>
    <name type="ordered locus">CKO_03031</name>
</gene>
<evidence type="ECO:0000255" key="1">
    <source>
        <dbReference type="HAMAP-Rule" id="MF_00247"/>
    </source>
</evidence>
<reference key="1">
    <citation type="submission" date="2007-08" db="EMBL/GenBank/DDBJ databases">
        <authorList>
            <consortium name="The Citrobacter koseri Genome Sequencing Project"/>
            <person name="McClelland M."/>
            <person name="Sanderson E.K."/>
            <person name="Porwollik S."/>
            <person name="Spieth J."/>
            <person name="Clifton W.S."/>
            <person name="Latreille P."/>
            <person name="Courtney L."/>
            <person name="Wang C."/>
            <person name="Pepin K."/>
            <person name="Bhonagiri V."/>
            <person name="Nash W."/>
            <person name="Johnson M."/>
            <person name="Thiruvilangam P."/>
            <person name="Wilson R."/>
        </authorList>
    </citation>
    <scope>NUCLEOTIDE SEQUENCE [LARGE SCALE GENOMIC DNA]</scope>
    <source>
        <strain>ATCC BAA-895 / CDC 4225-83 / SGSC4696</strain>
    </source>
</reference>
<comment type="function">
    <text evidence="1">Conversion of NADPH, generated by peripheral catabolic pathways, to NADH, which can enter the respiratory chain for energy generation.</text>
</comment>
<comment type="catalytic activity">
    <reaction evidence="1">
        <text>NAD(+) + NADPH = NADH + NADP(+)</text>
        <dbReference type="Rhea" id="RHEA:11692"/>
        <dbReference type="ChEBI" id="CHEBI:57540"/>
        <dbReference type="ChEBI" id="CHEBI:57783"/>
        <dbReference type="ChEBI" id="CHEBI:57945"/>
        <dbReference type="ChEBI" id="CHEBI:58349"/>
        <dbReference type="EC" id="1.6.1.1"/>
    </reaction>
</comment>
<comment type="cofactor">
    <cofactor evidence="1">
        <name>FAD</name>
        <dbReference type="ChEBI" id="CHEBI:57692"/>
    </cofactor>
    <text evidence="1">Binds 1 FAD per subunit.</text>
</comment>
<comment type="subcellular location">
    <subcellularLocation>
        <location evidence="1">Cytoplasm</location>
    </subcellularLocation>
</comment>
<comment type="similarity">
    <text evidence="1">Belongs to the class-I pyridine nucleotide-disulfide oxidoreductase family.</text>
</comment>
<dbReference type="EC" id="1.6.1.1" evidence="1"/>
<dbReference type="EMBL" id="CP000822">
    <property type="protein sequence ID" value="ABV14123.1"/>
    <property type="molecule type" value="Genomic_DNA"/>
</dbReference>
<dbReference type="RefSeq" id="WP_012133830.1">
    <property type="nucleotide sequence ID" value="NC_009792.1"/>
</dbReference>
<dbReference type="SMR" id="A8AKW0"/>
<dbReference type="STRING" id="290338.CKO_03031"/>
<dbReference type="GeneID" id="45136840"/>
<dbReference type="KEGG" id="cko:CKO_03031"/>
<dbReference type="HOGENOM" id="CLU_016755_0_0_6"/>
<dbReference type="OrthoDB" id="9800167at2"/>
<dbReference type="Proteomes" id="UP000008148">
    <property type="component" value="Chromosome"/>
</dbReference>
<dbReference type="GO" id="GO:0005829">
    <property type="term" value="C:cytosol"/>
    <property type="evidence" value="ECO:0007669"/>
    <property type="project" value="TreeGrafter"/>
</dbReference>
<dbReference type="GO" id="GO:0004148">
    <property type="term" value="F:dihydrolipoyl dehydrogenase (NADH) activity"/>
    <property type="evidence" value="ECO:0007669"/>
    <property type="project" value="TreeGrafter"/>
</dbReference>
<dbReference type="GO" id="GO:0050660">
    <property type="term" value="F:flavin adenine dinucleotide binding"/>
    <property type="evidence" value="ECO:0007669"/>
    <property type="project" value="TreeGrafter"/>
</dbReference>
<dbReference type="GO" id="GO:0003957">
    <property type="term" value="F:NAD(P)+ transhydrogenase (Si-specific) activity"/>
    <property type="evidence" value="ECO:0007669"/>
    <property type="project" value="UniProtKB-UniRule"/>
</dbReference>
<dbReference type="GO" id="GO:0006103">
    <property type="term" value="P:2-oxoglutarate metabolic process"/>
    <property type="evidence" value="ECO:0007669"/>
    <property type="project" value="TreeGrafter"/>
</dbReference>
<dbReference type="GO" id="GO:0006739">
    <property type="term" value="P:NADP metabolic process"/>
    <property type="evidence" value="ECO:0007669"/>
    <property type="project" value="UniProtKB-UniRule"/>
</dbReference>
<dbReference type="FunFam" id="3.30.390.30:FF:000002">
    <property type="entry name" value="Soluble pyridine nucleotide transhydrogenase"/>
    <property type="match status" value="1"/>
</dbReference>
<dbReference type="FunFam" id="3.50.50.60:FF:000008">
    <property type="entry name" value="Soluble pyridine nucleotide transhydrogenase"/>
    <property type="match status" value="1"/>
</dbReference>
<dbReference type="Gene3D" id="3.30.390.30">
    <property type="match status" value="1"/>
</dbReference>
<dbReference type="Gene3D" id="3.50.50.60">
    <property type="entry name" value="FAD/NAD(P)-binding domain"/>
    <property type="match status" value="2"/>
</dbReference>
<dbReference type="HAMAP" id="MF_00247">
    <property type="entry name" value="SthA"/>
    <property type="match status" value="1"/>
</dbReference>
<dbReference type="InterPro" id="IPR050151">
    <property type="entry name" value="Class-I_Pyr_Nuc-Dis_Oxidored"/>
</dbReference>
<dbReference type="InterPro" id="IPR036188">
    <property type="entry name" value="FAD/NAD-bd_sf"/>
</dbReference>
<dbReference type="InterPro" id="IPR023753">
    <property type="entry name" value="FAD/NAD-binding_dom"/>
</dbReference>
<dbReference type="InterPro" id="IPR016156">
    <property type="entry name" value="FAD/NAD-linked_Rdtase_dimer_sf"/>
</dbReference>
<dbReference type="InterPro" id="IPR001100">
    <property type="entry name" value="Pyr_nuc-diS_OxRdtase"/>
</dbReference>
<dbReference type="InterPro" id="IPR004099">
    <property type="entry name" value="Pyr_nucl-diS_OxRdtase_dimer"/>
</dbReference>
<dbReference type="InterPro" id="IPR022962">
    <property type="entry name" value="STH_gammaproteobact"/>
</dbReference>
<dbReference type="NCBIfam" id="NF003585">
    <property type="entry name" value="PRK05249.1"/>
    <property type="match status" value="1"/>
</dbReference>
<dbReference type="PANTHER" id="PTHR22912">
    <property type="entry name" value="DISULFIDE OXIDOREDUCTASE"/>
    <property type="match status" value="1"/>
</dbReference>
<dbReference type="PANTHER" id="PTHR22912:SF93">
    <property type="entry name" value="SOLUBLE PYRIDINE NUCLEOTIDE TRANSHYDROGENASE"/>
    <property type="match status" value="1"/>
</dbReference>
<dbReference type="Pfam" id="PF07992">
    <property type="entry name" value="Pyr_redox_2"/>
    <property type="match status" value="1"/>
</dbReference>
<dbReference type="Pfam" id="PF02852">
    <property type="entry name" value="Pyr_redox_dim"/>
    <property type="match status" value="1"/>
</dbReference>
<dbReference type="PIRSF" id="PIRSF000350">
    <property type="entry name" value="Mercury_reductase_MerA"/>
    <property type="match status" value="1"/>
</dbReference>
<dbReference type="PRINTS" id="PR00368">
    <property type="entry name" value="FADPNR"/>
</dbReference>
<dbReference type="PRINTS" id="PR00411">
    <property type="entry name" value="PNDRDTASEI"/>
</dbReference>
<dbReference type="SUPFAM" id="SSF51905">
    <property type="entry name" value="FAD/NAD(P)-binding domain"/>
    <property type="match status" value="1"/>
</dbReference>
<dbReference type="SUPFAM" id="SSF55424">
    <property type="entry name" value="FAD/NAD-linked reductases, dimerisation (C-terminal) domain"/>
    <property type="match status" value="1"/>
</dbReference>
<organism>
    <name type="scientific">Citrobacter koseri (strain ATCC BAA-895 / CDC 4225-83 / SGSC4696)</name>
    <dbReference type="NCBI Taxonomy" id="290338"/>
    <lineage>
        <taxon>Bacteria</taxon>
        <taxon>Pseudomonadati</taxon>
        <taxon>Pseudomonadota</taxon>
        <taxon>Gammaproteobacteria</taxon>
        <taxon>Enterobacterales</taxon>
        <taxon>Enterobacteriaceae</taxon>
        <taxon>Citrobacter</taxon>
    </lineage>
</organism>